<keyword id="KW-1003">Cell membrane</keyword>
<keyword id="KW-0418">Kinase</keyword>
<keyword id="KW-0472">Membrane</keyword>
<keyword id="KW-0597">Phosphoprotein</keyword>
<keyword id="KW-0598">Phosphotransferase system</keyword>
<keyword id="KW-0762">Sugar transport</keyword>
<keyword id="KW-0808">Transferase</keyword>
<keyword id="KW-0812">Transmembrane</keyword>
<keyword id="KW-1133">Transmembrane helix</keyword>
<keyword id="KW-0813">Transport</keyword>
<reference key="1">
    <citation type="journal article" date="1998" name="Appl. Environ. Microbiol.">
        <title>A gene system for glucitol transport and metabolism in Clostridium beijerinckii NCIMB 8052.</title>
        <authorList>
            <person name="Tangney M."/>
            <person name="Brehm J.K."/>
            <person name="Minton N.P."/>
            <person name="Mitchell W.J."/>
        </authorList>
    </citation>
    <scope>NUCLEOTIDE SEQUENCE [GENOMIC DNA]</scope>
    <scope>FUNCTION</scope>
    <scope>INDUCTION</scope>
    <source>
        <strain>ATCC 51743 / NCIMB 8052</strain>
    </source>
</reference>
<reference key="2">
    <citation type="submission" date="2007-06" db="EMBL/GenBank/DDBJ databases">
        <title>Complete sequence of Clostridium beijerinckii NCIMB 8052.</title>
        <authorList>
            <consortium name="US DOE Joint Genome Institute"/>
            <person name="Copeland A."/>
            <person name="Lucas S."/>
            <person name="Lapidus A."/>
            <person name="Barry K."/>
            <person name="Detter J.C."/>
            <person name="Glavina del Rio T."/>
            <person name="Hammon N."/>
            <person name="Israni S."/>
            <person name="Dalin E."/>
            <person name="Tice H."/>
            <person name="Pitluck S."/>
            <person name="Sims D."/>
            <person name="Brettin T."/>
            <person name="Bruce D."/>
            <person name="Tapia R."/>
            <person name="Brainard J."/>
            <person name="Schmutz J."/>
            <person name="Larimer F."/>
            <person name="Land M."/>
            <person name="Hauser L."/>
            <person name="Kyrpides N."/>
            <person name="Mikhailova N."/>
            <person name="Bennet G."/>
            <person name="Cann I."/>
            <person name="Chen J.-S."/>
            <person name="Contreras A.L."/>
            <person name="Jones D."/>
            <person name="Kashket E."/>
            <person name="Mitchell W."/>
            <person name="Stoddard S."/>
            <person name="Schwarz W."/>
            <person name="Qureshi N."/>
            <person name="Young M."/>
            <person name="Shi Z."/>
            <person name="Ezeji T."/>
            <person name="White B."/>
            <person name="Blaschek H."/>
            <person name="Richardson P."/>
        </authorList>
    </citation>
    <scope>NUCLEOTIDE SEQUENCE [LARGE SCALE GENOMIC DNA]</scope>
    <source>
        <strain>ATCC 51743 / NCIMB 8052</strain>
    </source>
</reference>
<sequence length="336" mass="35174">MEKYNAIKIVKGSGGFGGPLTVKPEEGKDTLLYITGGGAEPEIVEKIVNLTGCKAVNGFKTSVPEEQIFLVIIDCGGTLRCGIYPQKRIPTINVMPVGKSGPLAKFITEDIYVSAVGLNQISLADSSAEPIKSTKVPEEGKREFKYSADKKVSQSLAENSKSSIVQKIGMGAGKVVNTLYQAGRDAVQSMITTILPFMAFVAMLIGIIQGSGFGNWFAKILVPLAGNGIGLMILGFICSIPLLSALLGPGAVIAQIVGTLIGVEIGKGTIPPSLALPALFAINTQCACDFIPVGLGLAEAEPETVEVGVPSVLYSRFMIGVPRVAVAWVASIGLYQ</sequence>
<gene>
    <name type="primary">srlE</name>
    <name type="synonym">gutA2</name>
    <name type="ordered locus">Cbei_0337</name>
</gene>
<feature type="chain" id="PRO_0000186564" description="PTS system glucitol/sorbitol-specific EIIB component">
    <location>
        <begin position="1"/>
        <end position="336"/>
    </location>
</feature>
<feature type="transmembrane region" description="Helical" evidence="2">
    <location>
        <begin position="194"/>
        <end position="214"/>
    </location>
</feature>
<feature type="transmembrane region" description="Helical" evidence="2">
    <location>
        <begin position="228"/>
        <end position="248"/>
    </location>
</feature>
<feature type="transmembrane region" description="Helical" evidence="2">
    <location>
        <begin position="250"/>
        <end position="270"/>
    </location>
</feature>
<feature type="transmembrane region" description="Helical" evidence="2">
    <location>
        <begin position="278"/>
        <end position="298"/>
    </location>
</feature>
<feature type="transmembrane region" description="Helical" evidence="2">
    <location>
        <begin position="312"/>
        <end position="332"/>
    </location>
</feature>
<feature type="domain" description="PTS EIIB type-5" evidence="3">
    <location>
        <begin position="3"/>
        <end position="195"/>
    </location>
</feature>
<feature type="active site" description="Phosphocysteine intermediate; for EIIB activity" evidence="5">
    <location>
        <position position="75"/>
    </location>
</feature>
<feature type="modified residue" description="Phosphocysteine; by EIIA" evidence="3">
    <location>
        <position position="75"/>
    </location>
</feature>
<protein>
    <recommendedName>
        <fullName evidence="1">PTS system glucitol/sorbitol-specific EIIB component</fullName>
        <ecNumber evidence="1">2.7.1.198</ecNumber>
    </recommendedName>
    <alternativeName>
        <fullName evidence="1">EII-Gut</fullName>
    </alternativeName>
    <alternativeName>
        <fullName evidence="1">Enzyme II-Gut</fullName>
    </alternativeName>
    <alternativeName>
        <fullName evidence="1">Glucitol/sorbitol-specific phosphotransferase enzyme IIB component</fullName>
    </alternativeName>
</protein>
<proteinExistence type="evidence at transcript level"/>
<name>PTHB_CLOB8</name>
<dbReference type="EC" id="2.7.1.198" evidence="1"/>
<dbReference type="EMBL" id="AJ002527">
    <property type="protein sequence ID" value="CAA05514.1"/>
    <property type="molecule type" value="Genomic_DNA"/>
</dbReference>
<dbReference type="EMBL" id="CP000721">
    <property type="protein sequence ID" value="ABR32525.1"/>
    <property type="molecule type" value="Genomic_DNA"/>
</dbReference>
<dbReference type="RefSeq" id="WP_011967686.1">
    <property type="nucleotide sequence ID" value="NC_009617.1"/>
</dbReference>
<dbReference type="TCDB" id="4.A.4.1.2">
    <property type="family name" value="the pts glucitol (gut) family"/>
</dbReference>
<dbReference type="KEGG" id="cbe:Cbei_0337"/>
<dbReference type="eggNOG" id="COG3732">
    <property type="taxonomic scope" value="Bacteria"/>
</dbReference>
<dbReference type="HOGENOM" id="CLU_054195_0_0_9"/>
<dbReference type="Proteomes" id="UP000000565">
    <property type="component" value="Chromosome"/>
</dbReference>
<dbReference type="GO" id="GO:0005886">
    <property type="term" value="C:plasma membrane"/>
    <property type="evidence" value="ECO:0007669"/>
    <property type="project" value="UniProtKB-SubCell"/>
</dbReference>
<dbReference type="GO" id="GO:0016301">
    <property type="term" value="F:kinase activity"/>
    <property type="evidence" value="ECO:0007669"/>
    <property type="project" value="UniProtKB-KW"/>
</dbReference>
<dbReference type="GO" id="GO:0008982">
    <property type="term" value="F:protein-N(PI)-phosphohistidine-sugar phosphotransferase activity"/>
    <property type="evidence" value="ECO:0007669"/>
    <property type="project" value="InterPro"/>
</dbReference>
<dbReference type="GO" id="GO:0090563">
    <property type="term" value="F:protein-phosphocysteine-sugar phosphotransferase activity"/>
    <property type="evidence" value="ECO:0000250"/>
    <property type="project" value="UniProtKB"/>
</dbReference>
<dbReference type="GO" id="GO:0009401">
    <property type="term" value="P:phosphoenolpyruvate-dependent sugar phosphotransferase system"/>
    <property type="evidence" value="ECO:0000250"/>
    <property type="project" value="UniProtKB"/>
</dbReference>
<dbReference type="InterPro" id="IPR011638">
    <property type="entry name" value="PTS_EIIBC_GUT_C"/>
</dbReference>
<dbReference type="InterPro" id="IPR011618">
    <property type="entry name" value="PTS_EIIBC_GUT_N"/>
</dbReference>
<dbReference type="InterPro" id="IPR004702">
    <property type="entry name" value="PTS_sorb_EIIBC"/>
</dbReference>
<dbReference type="NCBIfam" id="TIGR00825">
    <property type="entry name" value="EIIBC-GUT"/>
    <property type="match status" value="1"/>
</dbReference>
<dbReference type="PANTHER" id="PTHR39427">
    <property type="match status" value="1"/>
</dbReference>
<dbReference type="PANTHER" id="PTHR39427:SF1">
    <property type="entry name" value="PTS SYSTEM GLUCITOL_SORBITOL-SPECIFIC EIIB COMPONENT"/>
    <property type="match status" value="1"/>
</dbReference>
<dbReference type="Pfam" id="PF07663">
    <property type="entry name" value="EIIBC-GUT_C"/>
    <property type="match status" value="1"/>
</dbReference>
<dbReference type="Pfam" id="PF03612">
    <property type="entry name" value="EIIBC-GUT_N"/>
    <property type="match status" value="1"/>
</dbReference>
<dbReference type="PROSITE" id="PS51102">
    <property type="entry name" value="PTS_EIIB_TYPE_5"/>
    <property type="match status" value="1"/>
</dbReference>
<evidence type="ECO:0000250" key="1">
    <source>
        <dbReference type="UniProtKB" id="P56580"/>
    </source>
</evidence>
<evidence type="ECO:0000255" key="2"/>
<evidence type="ECO:0000255" key="3">
    <source>
        <dbReference type="PROSITE-ProRule" id="PRU00425"/>
    </source>
</evidence>
<evidence type="ECO:0000269" key="4">
    <source>
    </source>
</evidence>
<evidence type="ECO:0000305" key="5"/>
<evidence type="ECO:0000305" key="6">
    <source>
    </source>
</evidence>
<organism>
    <name type="scientific">Clostridium beijerinckii (strain ATCC 51743 / NCIMB 8052)</name>
    <name type="common">Clostridium acetobutylicum</name>
    <dbReference type="NCBI Taxonomy" id="290402"/>
    <lineage>
        <taxon>Bacteria</taxon>
        <taxon>Bacillati</taxon>
        <taxon>Bacillota</taxon>
        <taxon>Clostridia</taxon>
        <taxon>Eubacteriales</taxon>
        <taxon>Clostridiaceae</taxon>
        <taxon>Clostridium</taxon>
    </lineage>
</organism>
<comment type="function">
    <text evidence="6">The phosphoenolpyruvate-dependent sugar phosphotransferase system (sugar PTS), a major carbohydrate active transport system, catalyzes the phosphorylation of incoming sugar substrates concomitantly with their translocation across the cell membrane. The enzyme II complex composed of SrlA, SrlB and SrlE is involved in glucitol/sorbitol transport.</text>
</comment>
<comment type="catalytic activity">
    <reaction evidence="1">
        <text>D-sorbitol(out) + N(pros)-phospho-L-histidyl-[protein] = D-sorbitol 6-phosphate(in) + L-histidyl-[protein]</text>
        <dbReference type="Rhea" id="RHEA:42484"/>
        <dbReference type="Rhea" id="RHEA-COMP:9745"/>
        <dbReference type="Rhea" id="RHEA-COMP:9746"/>
        <dbReference type="ChEBI" id="CHEBI:17924"/>
        <dbReference type="ChEBI" id="CHEBI:29979"/>
        <dbReference type="ChEBI" id="CHEBI:60084"/>
        <dbReference type="ChEBI" id="CHEBI:64837"/>
        <dbReference type="EC" id="2.7.1.198"/>
    </reaction>
</comment>
<comment type="subcellular location">
    <subcellularLocation>
        <location evidence="5">Cell membrane</location>
        <topology evidence="2">Multi-pass membrane protein</topology>
    </subcellularLocation>
</comment>
<comment type="induction">
    <text evidence="4">Activated by sorbitol and repressed by glucose.</text>
</comment>
<comment type="domain">
    <text evidence="3">The EIIB domain is phosphorylated by phospho-EIIA on a cysteinyl or histidyl residue, depending on the transported sugar. Then, it transfers the phosphoryl group to the sugar substrate concomitantly with the sugar uptake processed by the EIIC domain.</text>
</comment>
<accession>O32333</accession>
<accession>A6LQ95</accession>